<organism evidence="6">
    <name type="scientific">Oryza sativa subsp. indica</name>
    <name type="common">Rice</name>
    <dbReference type="NCBI Taxonomy" id="39946"/>
    <lineage>
        <taxon>Eukaryota</taxon>
        <taxon>Viridiplantae</taxon>
        <taxon>Streptophyta</taxon>
        <taxon>Embryophyta</taxon>
        <taxon>Tracheophyta</taxon>
        <taxon>Spermatophyta</taxon>
        <taxon>Magnoliopsida</taxon>
        <taxon>Liliopsida</taxon>
        <taxon>Poales</taxon>
        <taxon>Poaceae</taxon>
        <taxon>BOP clade</taxon>
        <taxon>Oryzoideae</taxon>
        <taxon>Oryzeae</taxon>
        <taxon>Oryzinae</taxon>
        <taxon>Oryza</taxon>
        <taxon>Oryza sativa</taxon>
    </lineage>
</organism>
<sequence>MKREYQEAGGSSGGGSSADMGSCKDKVMAGAAGEEEDVDELLAALGYKVRSSDMADVAQKLEQLEMAMGMGGVSAPGAADDGFVSHLATDTVHYNPSDLSSWVESMLSELNAPLPPIPPAPPAARHASTSSTVTGGGGSGFFELPAAADSSSSTYALRPISLPVVATADPSAADSARDTKRMRTGGGSTSSSSSSSSSLGGGASRGSVVEAAPPAMQGAAAANAPAVPVVVVDTQEAGIRLVHALLACAEAVQQENFAAAEALVKQIPTLAASQGGAMRKVAAYFGEALARRVYRFRPADSTLLDAAFADLLHAHFYESCPYLKFAHFTANQAILEAFAGCRRVHVVDFGIKQGMQWPALLQALALRPGGPPSFRLTGVGPPQPDETDALQQVGWKLAQFAHTIRVDFQYRGLVAATLADLEPFMLQPEGEADANEEPEVIAVNSVFELHRLLAQPGALEKVLGTVHAVRPRIVTVVEQEANHNSGSFLDRFTESLHYYSTMFDSLEGGSSGQAELSPPAAGGGGGTDQVMSEVYLGRQICNVVACEGAERTERHETLGQWRNRLGRAGFEPVHLGSNAYKQASTLLALFAGGDGYRVEEKEGCLTLGWHTRPLIATSAWRVAAA</sequence>
<feature type="chain" id="PRO_0000435824" description="DELLA protein SLR1">
    <location>
        <begin position="1"/>
        <end position="625"/>
    </location>
</feature>
<feature type="domain" description="GRAS" evidence="2">
    <location>
        <begin position="232"/>
        <end position="621"/>
    </location>
</feature>
<feature type="region of interest" description="Disordered" evidence="3">
    <location>
        <begin position="1"/>
        <end position="34"/>
    </location>
</feature>
<feature type="region of interest" description="Disordered" evidence="3">
    <location>
        <begin position="167"/>
        <end position="208"/>
    </location>
</feature>
<feature type="region of interest" description="Leucine repeat I (LRI)" evidence="2">
    <location>
        <begin position="239"/>
        <end position="294"/>
    </location>
</feature>
<feature type="region of interest" description="Required for possible homodimerization" evidence="1">
    <location>
        <begin position="241"/>
        <end position="278"/>
    </location>
</feature>
<feature type="region of interest" description="VHIID" evidence="2">
    <location>
        <begin position="313"/>
        <end position="378"/>
    </location>
</feature>
<feature type="region of interest" description="Leucine repeat II (LRII)" evidence="2">
    <location>
        <begin position="392"/>
        <end position="431"/>
    </location>
</feature>
<feature type="region of interest" description="PFYRE" evidence="2">
    <location>
        <begin position="441"/>
        <end position="542"/>
    </location>
</feature>
<feature type="region of interest" description="SAW" evidence="2">
    <location>
        <begin position="545"/>
        <end position="621"/>
    </location>
</feature>
<feature type="short sequence motif" description="DELLA motif" evidence="1">
    <location>
        <begin position="39"/>
        <end position="43"/>
    </location>
</feature>
<feature type="short sequence motif" description="LxCxE motif" evidence="2">
    <location>
        <begin position="246"/>
        <end position="250"/>
    </location>
</feature>
<feature type="short sequence motif" description="VHIID" evidence="2">
    <location>
        <begin position="344"/>
        <end position="348"/>
    </location>
</feature>
<feature type="short sequence motif" description="LXXLL motif" evidence="2">
    <location>
        <begin position="449"/>
        <end position="453"/>
    </location>
</feature>
<feature type="compositionally biased region" description="Low complexity" evidence="3">
    <location>
        <begin position="189"/>
        <end position="198"/>
    </location>
</feature>
<feature type="sequence conflict" description="In Ref. 1; AAX07462." ref="1">
    <original>G</original>
    <variation>A</variation>
    <location>
        <position position="71"/>
    </location>
</feature>
<name>SLR1_ORYSI</name>
<protein>
    <recommendedName>
        <fullName evidence="5">DELLA protein SLR1</fullName>
    </recommendedName>
    <alternativeName>
        <fullName evidence="4">Gibberellic acid-insensitive</fullName>
    </alternativeName>
    <alternativeName>
        <fullName evidence="4">OsGAI</fullName>
    </alternativeName>
    <alternativeName>
        <fullName evidence="5">Protein SLENDER RICE1</fullName>
    </alternativeName>
</protein>
<comment type="function">
    <text evidence="1">Probable transcriptional regulator that acts as a repressor of the gibberellin (GA) signaling pathway. Probably acts by participating in large multiprotein complexes that repress transcription of GA-inducible genes. Upon GA application, it is degraded by the proteasome, allowing the GA signaling pathway. In contrast, its overexpression prevents the GA signaling pathway and induces a dwarf phenotype.</text>
</comment>
<comment type="domain">
    <text evidence="1">The DELLA motif is required for its GA-induced degradation.</text>
</comment>
<comment type="similarity">
    <text evidence="5">Belongs to the GRAS family. DELLA subfamily.</text>
</comment>
<keyword id="KW-1185">Reference proteome</keyword>
<keyword id="KW-0804">Transcription</keyword>
<keyword id="KW-0805">Transcription regulation</keyword>
<reference key="1">
    <citation type="submission" date="2004-10" db="EMBL/GenBank/DDBJ databases">
        <title>Functional characterization of gibberellic acid insensitive (GAI) gene and its promoter from indica rice.</title>
        <authorList>
            <person name="Chowdhury A.H."/>
            <person name="Bhattacharyya J."/>
            <person name="Maiti M.K."/>
            <person name="Basu A."/>
            <person name="Sen S.K."/>
        </authorList>
    </citation>
    <scope>NUCLEOTIDE SEQUENCE [GENOMIC DNA]</scope>
</reference>
<reference key="2">
    <citation type="journal article" date="2005" name="PLoS Biol.">
        <title>The genomes of Oryza sativa: a history of duplications.</title>
        <authorList>
            <person name="Yu J."/>
            <person name="Wang J."/>
            <person name="Lin W."/>
            <person name="Li S."/>
            <person name="Li H."/>
            <person name="Zhou J."/>
            <person name="Ni P."/>
            <person name="Dong W."/>
            <person name="Hu S."/>
            <person name="Zeng C."/>
            <person name="Zhang J."/>
            <person name="Zhang Y."/>
            <person name="Li R."/>
            <person name="Xu Z."/>
            <person name="Li S."/>
            <person name="Li X."/>
            <person name="Zheng H."/>
            <person name="Cong L."/>
            <person name="Lin L."/>
            <person name="Yin J."/>
            <person name="Geng J."/>
            <person name="Li G."/>
            <person name="Shi J."/>
            <person name="Liu J."/>
            <person name="Lv H."/>
            <person name="Li J."/>
            <person name="Wang J."/>
            <person name="Deng Y."/>
            <person name="Ran L."/>
            <person name="Shi X."/>
            <person name="Wang X."/>
            <person name="Wu Q."/>
            <person name="Li C."/>
            <person name="Ren X."/>
            <person name="Wang J."/>
            <person name="Wang X."/>
            <person name="Li D."/>
            <person name="Liu D."/>
            <person name="Zhang X."/>
            <person name="Ji Z."/>
            <person name="Zhao W."/>
            <person name="Sun Y."/>
            <person name="Zhang Z."/>
            <person name="Bao J."/>
            <person name="Han Y."/>
            <person name="Dong L."/>
            <person name="Ji J."/>
            <person name="Chen P."/>
            <person name="Wu S."/>
            <person name="Liu J."/>
            <person name="Xiao Y."/>
            <person name="Bu D."/>
            <person name="Tan J."/>
            <person name="Yang L."/>
            <person name="Ye C."/>
            <person name="Zhang J."/>
            <person name="Xu J."/>
            <person name="Zhou Y."/>
            <person name="Yu Y."/>
            <person name="Zhang B."/>
            <person name="Zhuang S."/>
            <person name="Wei H."/>
            <person name="Liu B."/>
            <person name="Lei M."/>
            <person name="Yu H."/>
            <person name="Li Y."/>
            <person name="Xu H."/>
            <person name="Wei S."/>
            <person name="He X."/>
            <person name="Fang L."/>
            <person name="Zhang Z."/>
            <person name="Zhang Y."/>
            <person name="Huang X."/>
            <person name="Su Z."/>
            <person name="Tong W."/>
            <person name="Li J."/>
            <person name="Tong Z."/>
            <person name="Li S."/>
            <person name="Ye J."/>
            <person name="Wang L."/>
            <person name="Fang L."/>
            <person name="Lei T."/>
            <person name="Chen C.-S."/>
            <person name="Chen H.-C."/>
            <person name="Xu Z."/>
            <person name="Li H."/>
            <person name="Huang H."/>
            <person name="Zhang F."/>
            <person name="Xu H."/>
            <person name="Li N."/>
            <person name="Zhao C."/>
            <person name="Li S."/>
            <person name="Dong L."/>
            <person name="Huang Y."/>
            <person name="Li L."/>
            <person name="Xi Y."/>
            <person name="Qi Q."/>
            <person name="Li W."/>
            <person name="Zhang B."/>
            <person name="Hu W."/>
            <person name="Zhang Y."/>
            <person name="Tian X."/>
            <person name="Jiao Y."/>
            <person name="Liang X."/>
            <person name="Jin J."/>
            <person name="Gao L."/>
            <person name="Zheng W."/>
            <person name="Hao B."/>
            <person name="Liu S.-M."/>
            <person name="Wang W."/>
            <person name="Yuan L."/>
            <person name="Cao M."/>
            <person name="McDermott J."/>
            <person name="Samudrala R."/>
            <person name="Wang J."/>
            <person name="Wong G.K.-S."/>
            <person name="Yang H."/>
        </authorList>
    </citation>
    <scope>NUCLEOTIDE SEQUENCE [LARGE SCALE GENOMIC DNA]</scope>
    <source>
        <strain>cv. 93-11</strain>
    </source>
</reference>
<evidence type="ECO:0000250" key="1">
    <source>
        <dbReference type="UniProtKB" id="Q7G7J6"/>
    </source>
</evidence>
<evidence type="ECO:0000255" key="2">
    <source>
        <dbReference type="PROSITE-ProRule" id="PRU01191"/>
    </source>
</evidence>
<evidence type="ECO:0000256" key="3">
    <source>
        <dbReference type="SAM" id="MobiDB-lite"/>
    </source>
</evidence>
<evidence type="ECO:0000303" key="4">
    <source ref="1"/>
</evidence>
<evidence type="ECO:0000305" key="5"/>
<evidence type="ECO:0000312" key="6">
    <source>
        <dbReference type="EMBL" id="AAX07462.1"/>
    </source>
</evidence>
<evidence type="ECO:0000312" key="7">
    <source>
        <dbReference type="EMBL" id="EAY91579.1"/>
    </source>
</evidence>
<proteinExistence type="inferred from homology"/>
<accession>Q2TN88</accession>
<accession>A2XL69</accession>
<dbReference type="EMBL" id="AY781175">
    <property type="protein sequence ID" value="AAX07462.1"/>
    <property type="molecule type" value="Genomic_DNA"/>
</dbReference>
<dbReference type="EMBL" id="CM000128">
    <property type="protein sequence ID" value="EAY91579.1"/>
    <property type="molecule type" value="Genomic_DNA"/>
</dbReference>
<dbReference type="SMR" id="Q2TN88"/>
<dbReference type="STRING" id="39946.Q2TN88"/>
<dbReference type="EnsemblPlants" id="BGIOSGA013420-TA">
    <property type="protein sequence ID" value="BGIOSGA013420-PA"/>
    <property type="gene ID" value="BGIOSGA013420"/>
</dbReference>
<dbReference type="EnsemblPlants" id="OsIR64_03g0031060.01">
    <property type="protein sequence ID" value="OsIR64_03g0031060.01"/>
    <property type="gene ID" value="OsIR64_03g0031060"/>
</dbReference>
<dbReference type="EnsemblPlants" id="OsKYG_03g0031490.01">
    <property type="protein sequence ID" value="OsKYG_03g0031490.01"/>
    <property type="gene ID" value="OsKYG_03g0031490"/>
</dbReference>
<dbReference type="EnsemblPlants" id="OsLaMu_03g0031260.01">
    <property type="protein sequence ID" value="OsLaMu_03g0031260.01"/>
    <property type="gene ID" value="OsLaMu_03g0031260"/>
</dbReference>
<dbReference type="EnsemblPlants" id="OsLiXu_03g0031240.01">
    <property type="protein sequence ID" value="OsLiXu_03g0031240.01"/>
    <property type="gene ID" value="OsLiXu_03g0031240"/>
</dbReference>
<dbReference type="EnsemblPlants" id="OsPr106_03g0031390.01">
    <property type="protein sequence ID" value="OsPr106_03g0031390.01"/>
    <property type="gene ID" value="OsPr106_03g0031390"/>
</dbReference>
<dbReference type="EnsemblPlants" id="OsZS97_03G031380_01">
    <property type="protein sequence ID" value="OsZS97_03G031380_01"/>
    <property type="gene ID" value="OsZS97_03G031380"/>
</dbReference>
<dbReference type="Gramene" id="BGIOSGA013420-TA">
    <property type="protein sequence ID" value="BGIOSGA013420-PA"/>
    <property type="gene ID" value="BGIOSGA013420"/>
</dbReference>
<dbReference type="Gramene" id="OsIR64_03g0031060.01">
    <property type="protein sequence ID" value="OsIR64_03g0031060.01"/>
    <property type="gene ID" value="OsIR64_03g0031060"/>
</dbReference>
<dbReference type="Gramene" id="OsKYG_03g0031490.01">
    <property type="protein sequence ID" value="OsKYG_03g0031490.01"/>
    <property type="gene ID" value="OsKYG_03g0031490"/>
</dbReference>
<dbReference type="Gramene" id="OsLaMu_03g0031260.01">
    <property type="protein sequence ID" value="OsLaMu_03g0031260.01"/>
    <property type="gene ID" value="OsLaMu_03g0031260"/>
</dbReference>
<dbReference type="Gramene" id="OsLiXu_03g0031240.01">
    <property type="protein sequence ID" value="OsLiXu_03g0031240.01"/>
    <property type="gene ID" value="OsLiXu_03g0031240"/>
</dbReference>
<dbReference type="Gramene" id="OsPr106_03g0031390.01">
    <property type="protein sequence ID" value="OsPr106_03g0031390.01"/>
    <property type="gene ID" value="OsPr106_03g0031390"/>
</dbReference>
<dbReference type="Gramene" id="OsZS97_03G031380_01">
    <property type="protein sequence ID" value="OsZS97_03G031380_01"/>
    <property type="gene ID" value="OsZS97_03G031380"/>
</dbReference>
<dbReference type="OMA" id="ICNVVAY"/>
<dbReference type="Proteomes" id="UP000007015">
    <property type="component" value="Chromosome 3"/>
</dbReference>
<dbReference type="GO" id="GO:0005634">
    <property type="term" value="C:nucleus"/>
    <property type="evidence" value="ECO:0007669"/>
    <property type="project" value="EnsemblPlants"/>
</dbReference>
<dbReference type="FunFam" id="1.10.10.1290:FF:000001">
    <property type="entry name" value="DELLA protein GAI"/>
    <property type="match status" value="1"/>
</dbReference>
<dbReference type="Gene3D" id="1.10.10.1290">
    <property type="entry name" value="Transcriptional regulator DELLA, N-terminal domain"/>
    <property type="match status" value="1"/>
</dbReference>
<dbReference type="InterPro" id="IPR038088">
    <property type="entry name" value="DELLA_N_sf"/>
</dbReference>
<dbReference type="InterPro" id="IPR021914">
    <property type="entry name" value="TF_DELLA_N"/>
</dbReference>
<dbReference type="InterPro" id="IPR005202">
    <property type="entry name" value="TF_GRAS"/>
</dbReference>
<dbReference type="PANTHER" id="PTHR31636">
    <property type="entry name" value="OSJNBA0084A10.13 PROTEIN-RELATED"/>
    <property type="match status" value="1"/>
</dbReference>
<dbReference type="Pfam" id="PF12041">
    <property type="entry name" value="DELLA"/>
    <property type="match status" value="1"/>
</dbReference>
<dbReference type="Pfam" id="PF03514">
    <property type="entry name" value="GRAS"/>
    <property type="match status" value="1"/>
</dbReference>
<dbReference type="SMART" id="SM01129">
    <property type="entry name" value="DELLA"/>
    <property type="match status" value="1"/>
</dbReference>
<dbReference type="PROSITE" id="PS50985">
    <property type="entry name" value="GRAS"/>
    <property type="match status" value="1"/>
</dbReference>
<gene>
    <name evidence="5" type="primary">SLR1</name>
    <name evidence="4" type="synonym">GAI</name>
    <name evidence="7" type="ORF">OsI_13213</name>
</gene>